<comment type="function">
    <text evidence="7">Involved in the biosynthesis of vanillin (4-hydroxy-3-methoxy-benzaldehyde) and derivative natural products, key components of vanilla pods flavor (PubMed:12423881). Catalyzes the conversion of (E)-4-coumarate to 4-hydroxybenzaldehyde, a vanillin precursor (PubMed:12423881). Mediates the conversion of ferulic acid to 3-methoxy-4-hydroxybenzaldehyde with a very low efficiency (PubMed:12423881). Cannot use cinnamic, caffeic, sinapic and o-coumaric acids as substrates (PubMed:12423881).</text>
</comment>
<comment type="catalytic activity">
    <reaction evidence="7">
        <text>(E)-4-coumarate + H2O = 4-hydroxybenzaldehyde + acetate</text>
        <dbReference type="Rhea" id="RHEA:78827"/>
        <dbReference type="ChEBI" id="CHEBI:12876"/>
        <dbReference type="ChEBI" id="CHEBI:15377"/>
        <dbReference type="ChEBI" id="CHEBI:17597"/>
        <dbReference type="ChEBI" id="CHEBI:30089"/>
        <dbReference type="EC" id="4.1.2.66"/>
    </reaction>
    <physiologicalReaction direction="left-to-right" evidence="7">
        <dbReference type="Rhea" id="RHEA:78828"/>
    </physiologicalReaction>
</comment>
<comment type="activity regulation">
    <text evidence="7">Inhibited by ascorbate.</text>
</comment>
<comment type="biophysicochemical properties">
    <phDependence>
        <text evidence="7">Optimum pH is 8.</text>
    </phDependence>
</comment>
<comment type="pathway">
    <text evidence="7">Aromatic compound metabolism; phenylpropanoid biosynthesis.</text>
</comment>
<comment type="subunit">
    <text evidence="1">Forms homodimers, homotrimers and homotetramers.</text>
</comment>
<comment type="subcellular location">
    <subcellularLocation>
        <location evidence="1">Plastid</location>
        <location evidence="1">Chloroplast</location>
    </subcellularLocation>
</comment>
<comment type="tissue specificity">
    <text evidence="7">Mainly expressed in pods, but also present in stems, roots, leaves and embryos (at protein level).</text>
</comment>
<comment type="developmental stage">
    <text evidence="7">In pods, highest levels are observed 7 to 8 months after pollination (at protein level).</text>
</comment>
<comment type="similarity">
    <text evidence="5 6">Belongs to the peptidase C1 family.</text>
</comment>
<keyword id="KW-0150">Chloroplast</keyword>
<keyword id="KW-1015">Disulfide bond</keyword>
<keyword id="KW-0325">Glycoprotein</keyword>
<keyword id="KW-0456">Lyase</keyword>
<keyword id="KW-0934">Plastid</keyword>
<keyword id="KW-0809">Transit peptide</keyword>
<feature type="transit peptide" description="Chloroplast" evidence="9">
    <location>
        <begin position="1"/>
        <end status="unknown"/>
    </location>
</feature>
<feature type="propeptide" id="PRO_0000460730" description="Activation peptide" evidence="1">
    <location>
        <begin status="unknown"/>
        <end position="137"/>
    </location>
</feature>
<feature type="chain" id="PRO_0000460731" description="4-hydroxybenzaldehyde synthase, chloroplastic">
    <location>
        <begin position="138"/>
        <end position="352"/>
    </location>
</feature>
<feature type="active site" evidence="5">
    <location>
        <position position="298"/>
    </location>
</feature>
<feature type="active site" evidence="6">
    <location>
        <position position="318"/>
    </location>
</feature>
<feature type="glycosylation site" description="N-linked (GlcNAc...) asparagine" evidence="4">
    <location>
        <position position="122"/>
    </location>
</feature>
<feature type="glycosylation site" description="N-linked (GlcNAc...) asparagine" evidence="4">
    <location>
        <position position="247"/>
    </location>
</feature>
<feature type="disulfide bond" evidence="2">
    <location>
        <begin position="159"/>
        <end position="199"/>
    </location>
</feature>
<feature type="disulfide bond" evidence="3">
    <location>
        <begin position="190"/>
        <end position="231"/>
    </location>
</feature>
<feature type="disulfide bond" evidence="3">
    <location>
        <begin position="289"/>
        <end position="339"/>
    </location>
</feature>
<gene>
    <name evidence="8" type="primary">4HBS</name>
    <name evidence="9" type="synonym">CSE</name>
</gene>
<organism>
    <name type="scientific">Vanilla planifolia</name>
    <name type="common">Vanilla</name>
    <dbReference type="NCBI Taxonomy" id="51239"/>
    <lineage>
        <taxon>Eukaryota</taxon>
        <taxon>Viridiplantae</taxon>
        <taxon>Streptophyta</taxon>
        <taxon>Embryophyta</taxon>
        <taxon>Tracheophyta</taxon>
        <taxon>Spermatophyta</taxon>
        <taxon>Magnoliopsida</taxon>
        <taxon>Liliopsida</taxon>
        <taxon>Asparagales</taxon>
        <taxon>Orchidaceae</taxon>
        <taxon>Vanilloideae</taxon>
        <taxon>Vanilleae</taxon>
        <taxon>Vanilla</taxon>
    </lineage>
</organism>
<reference key="1">
    <citation type="journal article" date="2002" name="Phytochemistry">
        <title>Unusual 4-hydroxybenzaldehyde synthase activity from tissue cultures of the vanilla orchid Vanilla planifolia.</title>
        <authorList>
            <person name="Podstolski A."/>
            <person name="Havkin-Frenkel D."/>
            <person name="Malinowski J."/>
            <person name="Blount J.W."/>
            <person name="Kourteva G."/>
            <person name="Dixon R.A."/>
        </authorList>
    </citation>
    <scope>NUCLEOTIDE SEQUENCE</scope>
    <scope>FUNCTION</scope>
    <scope>CATALYTIC ACTIVITY</scope>
    <scope>PATHWAY</scope>
    <scope>BIOPHYSICOCHEMICAL PROPERTIES</scope>
    <scope>ACTIVITY REGULATION</scope>
    <scope>TISSUE SPECIFICITY</scope>
    <scope>DEVELOPMENTAL STAGE</scope>
</reference>
<reference key="2">
    <citation type="journal article" date="2020" name="Nat. Food">
        <title>A phased Vanilla planifolia genome enables genetic improvement of flavour and production.</title>
        <authorList>
            <person name="Hasing T."/>
            <person name="Tang H."/>
            <person name="Brym M."/>
            <person name="Khazi F."/>
            <person name="Huang T."/>
            <person name="Chambers A.H."/>
        </authorList>
    </citation>
    <scope>NUCLEOTIDE SEQUENCE [LARGE SCALE GENOMIC DNA]</scope>
    <source>
        <strain>cv. Daphna</strain>
        <tissue>Leaf</tissue>
    </source>
</reference>
<proteinExistence type="evidence at protein level"/>
<protein>
    <recommendedName>
        <fullName evidence="10">4-hydroxybenzaldehyde synthase, chloroplastic</fullName>
        <shortName evidence="10">4-coumarate hydratase/lyase</shortName>
        <ecNumber evidence="7">4.1.2.66</ecNumber>
    </recommendedName>
</protein>
<evidence type="ECO:0000250" key="1">
    <source>
        <dbReference type="UniProtKB" id="A0A0F7G352"/>
    </source>
</evidence>
<evidence type="ECO:0000250" key="2">
    <source>
        <dbReference type="UniProtKB" id="P07858"/>
    </source>
</evidence>
<evidence type="ECO:0000250" key="3">
    <source>
        <dbReference type="UniProtKB" id="P25250"/>
    </source>
</evidence>
<evidence type="ECO:0000255" key="4">
    <source>
        <dbReference type="PROSITE-ProRule" id="PRU00498"/>
    </source>
</evidence>
<evidence type="ECO:0000255" key="5">
    <source>
        <dbReference type="PROSITE-ProRule" id="PRU10089"/>
    </source>
</evidence>
<evidence type="ECO:0000255" key="6">
    <source>
        <dbReference type="PROSITE-ProRule" id="PRU10090"/>
    </source>
</evidence>
<evidence type="ECO:0000269" key="7">
    <source>
    </source>
</evidence>
<evidence type="ECO:0000303" key="8">
    <source>
    </source>
</evidence>
<evidence type="ECO:0000305" key="9"/>
<evidence type="ECO:0000305" key="10">
    <source>
    </source>
</evidence>
<name>4HBS_VANPL</name>
<sequence>MAAKLLFFLLFLVSALSVALAGFEEDNPIRSVTQRPDSIEPAILGVLGSCRHAFHFARFARRYGKSYGSEEEIKKRFGIFVENLAFIRSTNRKDLSYTLGINQFADLTWEEFRTNRLGAAQNCSATAHGNHRFVDGVLPVTRDWREQGIVSPVKDQGSCGSWTFSTTGALEAAYTQLTGSTLSEQQLVDCASAFNNFGCGGLPSQAFEYVKYNGGIDTEQTYPYLGVMGICNFKQENVGVKVIDSINITLGAEDELKHAVGLVRPVSVAFEVVKGFNLYKKGVYSSDTCGRDPMDVNHAVLAVGYGVEDGIPYWLIKNSWGTNWGDNGYFKMELGKNMCGVATCASYPIVAV</sequence>
<dbReference type="EC" id="4.1.2.66" evidence="7"/>
<dbReference type="EMBL" id="JADCNM010000041">
    <property type="status" value="NOT_ANNOTATED_CDS"/>
    <property type="molecule type" value="Genomic_DNA"/>
</dbReference>
<dbReference type="SMR" id="P0DO76"/>
<dbReference type="UniPathway" id="UPA00711"/>
<dbReference type="Proteomes" id="UP000639772">
    <property type="component" value="Unassembled WGS sequence"/>
</dbReference>
<dbReference type="GO" id="GO:0009507">
    <property type="term" value="C:chloroplast"/>
    <property type="evidence" value="ECO:0000250"/>
    <property type="project" value="UniProtKB"/>
</dbReference>
<dbReference type="GO" id="GO:0008234">
    <property type="term" value="F:cysteine-type peptidase activity"/>
    <property type="evidence" value="ECO:0007669"/>
    <property type="project" value="InterPro"/>
</dbReference>
<dbReference type="GO" id="GO:0042802">
    <property type="term" value="F:identical protein binding"/>
    <property type="evidence" value="ECO:0000250"/>
    <property type="project" value="UniProtKB"/>
</dbReference>
<dbReference type="GO" id="GO:0016829">
    <property type="term" value="F:lyase activity"/>
    <property type="evidence" value="ECO:0007669"/>
    <property type="project" value="UniProtKB-KW"/>
</dbReference>
<dbReference type="GO" id="GO:0042803">
    <property type="term" value="F:protein homodimerization activity"/>
    <property type="evidence" value="ECO:0000250"/>
    <property type="project" value="UniProtKB"/>
</dbReference>
<dbReference type="GO" id="GO:0006508">
    <property type="term" value="P:proteolysis"/>
    <property type="evidence" value="ECO:0007669"/>
    <property type="project" value="InterPro"/>
</dbReference>
<dbReference type="GO" id="GO:0042189">
    <property type="term" value="P:vanillin biosynthetic process"/>
    <property type="evidence" value="ECO:0000250"/>
    <property type="project" value="UniProtKB"/>
</dbReference>
<dbReference type="CDD" id="cd02248">
    <property type="entry name" value="Peptidase_C1A"/>
    <property type="match status" value="1"/>
</dbReference>
<dbReference type="FunFam" id="3.90.70.10:FF:000039">
    <property type="entry name" value="Cysteine proteinase 2, putative"/>
    <property type="match status" value="1"/>
</dbReference>
<dbReference type="Gene3D" id="3.90.70.10">
    <property type="entry name" value="Cysteine proteinases"/>
    <property type="match status" value="1"/>
</dbReference>
<dbReference type="InterPro" id="IPR038765">
    <property type="entry name" value="Papain-like_cys_pep_sf"/>
</dbReference>
<dbReference type="InterPro" id="IPR025661">
    <property type="entry name" value="Pept_asp_AS"/>
</dbReference>
<dbReference type="InterPro" id="IPR025660">
    <property type="entry name" value="Pept_his_AS"/>
</dbReference>
<dbReference type="InterPro" id="IPR013128">
    <property type="entry name" value="Peptidase_C1A"/>
</dbReference>
<dbReference type="InterPro" id="IPR000668">
    <property type="entry name" value="Peptidase_C1A_C"/>
</dbReference>
<dbReference type="InterPro" id="IPR039417">
    <property type="entry name" value="Peptidase_C1A_papain-like"/>
</dbReference>
<dbReference type="InterPro" id="IPR013201">
    <property type="entry name" value="Prot_inhib_I29"/>
</dbReference>
<dbReference type="PANTHER" id="PTHR12411">
    <property type="entry name" value="CYSTEINE PROTEASE FAMILY C1-RELATED"/>
    <property type="match status" value="1"/>
</dbReference>
<dbReference type="Pfam" id="PF08246">
    <property type="entry name" value="Inhibitor_I29"/>
    <property type="match status" value="1"/>
</dbReference>
<dbReference type="Pfam" id="PF00112">
    <property type="entry name" value="Peptidase_C1"/>
    <property type="match status" value="1"/>
</dbReference>
<dbReference type="SMART" id="SM00848">
    <property type="entry name" value="Inhibitor_I29"/>
    <property type="match status" value="1"/>
</dbReference>
<dbReference type="SMART" id="SM00645">
    <property type="entry name" value="Pept_C1"/>
    <property type="match status" value="1"/>
</dbReference>
<dbReference type="SUPFAM" id="SSF54001">
    <property type="entry name" value="Cysteine proteinases"/>
    <property type="match status" value="1"/>
</dbReference>
<dbReference type="PROSITE" id="PS00640">
    <property type="entry name" value="THIOL_PROTEASE_ASN"/>
    <property type="match status" value="1"/>
</dbReference>
<dbReference type="PROSITE" id="PS00639">
    <property type="entry name" value="THIOL_PROTEASE_HIS"/>
    <property type="match status" value="1"/>
</dbReference>
<accession>P0DO76</accession>